<gene>
    <name type="primary">rluD</name>
    <name type="synonym">sfhB</name>
    <name type="ordered locus">c3116</name>
</gene>
<reference key="1">
    <citation type="journal article" date="2002" name="Proc. Natl. Acad. Sci. U.S.A.">
        <title>Extensive mosaic structure revealed by the complete genome sequence of uropathogenic Escherichia coli.</title>
        <authorList>
            <person name="Welch R.A."/>
            <person name="Burland V."/>
            <person name="Plunkett G. III"/>
            <person name="Redford P."/>
            <person name="Roesch P."/>
            <person name="Rasko D."/>
            <person name="Buckles E.L."/>
            <person name="Liou S.-R."/>
            <person name="Boutin A."/>
            <person name="Hackett J."/>
            <person name="Stroud D."/>
            <person name="Mayhew G.F."/>
            <person name="Rose D.J."/>
            <person name="Zhou S."/>
            <person name="Schwartz D.C."/>
            <person name="Perna N.T."/>
            <person name="Mobley H.L.T."/>
            <person name="Donnenberg M.S."/>
            <person name="Blattner F.R."/>
        </authorList>
    </citation>
    <scope>NUCLEOTIDE SEQUENCE [LARGE SCALE GENOMIC DNA]</scope>
    <source>
        <strain>CFT073 / ATCC 700928 / UPEC</strain>
    </source>
</reference>
<dbReference type="EC" id="5.4.99.23" evidence="2"/>
<dbReference type="EMBL" id="AE014075">
    <property type="protein sequence ID" value="AAN81565.1"/>
    <property type="molecule type" value="Genomic_DNA"/>
</dbReference>
<dbReference type="RefSeq" id="WP_000079112.1">
    <property type="nucleotide sequence ID" value="NZ_CP051263.1"/>
</dbReference>
<dbReference type="SMR" id="P65834"/>
<dbReference type="STRING" id="199310.c3116"/>
<dbReference type="GeneID" id="93774492"/>
<dbReference type="KEGG" id="ecc:c3116"/>
<dbReference type="eggNOG" id="COG0564">
    <property type="taxonomic scope" value="Bacteria"/>
</dbReference>
<dbReference type="HOGENOM" id="CLU_016902_4_0_6"/>
<dbReference type="BioCyc" id="ECOL199310:C3116-MONOMER"/>
<dbReference type="Proteomes" id="UP000001410">
    <property type="component" value="Chromosome"/>
</dbReference>
<dbReference type="GO" id="GO:0005737">
    <property type="term" value="C:cytoplasm"/>
    <property type="evidence" value="ECO:0007669"/>
    <property type="project" value="UniProtKB-SubCell"/>
</dbReference>
<dbReference type="GO" id="GO:0160140">
    <property type="term" value="F:23S rRNA pseudouridine(1911/1915/1917) synthase activity"/>
    <property type="evidence" value="ECO:0007669"/>
    <property type="project" value="UniProtKB-EC"/>
</dbReference>
<dbReference type="GO" id="GO:0003723">
    <property type="term" value="F:RNA binding"/>
    <property type="evidence" value="ECO:0007669"/>
    <property type="project" value="UniProtKB-KW"/>
</dbReference>
<dbReference type="GO" id="GO:0000455">
    <property type="term" value="P:enzyme-directed rRNA pseudouridine synthesis"/>
    <property type="evidence" value="ECO:0007669"/>
    <property type="project" value="TreeGrafter"/>
</dbReference>
<dbReference type="CDD" id="cd02869">
    <property type="entry name" value="PseudoU_synth_RluA_like"/>
    <property type="match status" value="1"/>
</dbReference>
<dbReference type="CDD" id="cd00165">
    <property type="entry name" value="S4"/>
    <property type="match status" value="1"/>
</dbReference>
<dbReference type="FunFam" id="3.10.290.10:FF:000011">
    <property type="entry name" value="Pseudouridine synthase"/>
    <property type="match status" value="1"/>
</dbReference>
<dbReference type="FunFam" id="3.30.2350.10:FF:000004">
    <property type="entry name" value="Pseudouridine synthase"/>
    <property type="match status" value="1"/>
</dbReference>
<dbReference type="Gene3D" id="6.10.140.230">
    <property type="match status" value="1"/>
</dbReference>
<dbReference type="Gene3D" id="3.30.2350.10">
    <property type="entry name" value="Pseudouridine synthase"/>
    <property type="match status" value="1"/>
</dbReference>
<dbReference type="Gene3D" id="3.10.290.10">
    <property type="entry name" value="RNA-binding S4 domain"/>
    <property type="match status" value="1"/>
</dbReference>
<dbReference type="InterPro" id="IPR020103">
    <property type="entry name" value="PsdUridine_synth_cat_dom_sf"/>
</dbReference>
<dbReference type="InterPro" id="IPR006224">
    <property type="entry name" value="PsdUridine_synth_RluA-like_CS"/>
</dbReference>
<dbReference type="InterPro" id="IPR006225">
    <property type="entry name" value="PsdUridine_synth_RluC/D"/>
</dbReference>
<dbReference type="InterPro" id="IPR006145">
    <property type="entry name" value="PsdUridine_synth_RsuA/RluA"/>
</dbReference>
<dbReference type="InterPro" id="IPR050188">
    <property type="entry name" value="RluA_PseudoU_synthase"/>
</dbReference>
<dbReference type="InterPro" id="IPR002942">
    <property type="entry name" value="S4_RNA-bd"/>
</dbReference>
<dbReference type="InterPro" id="IPR036986">
    <property type="entry name" value="S4_RNA-bd_sf"/>
</dbReference>
<dbReference type="NCBIfam" id="NF008385">
    <property type="entry name" value="PRK11180.1"/>
    <property type="match status" value="1"/>
</dbReference>
<dbReference type="NCBIfam" id="TIGR00005">
    <property type="entry name" value="rluA_subfam"/>
    <property type="match status" value="1"/>
</dbReference>
<dbReference type="PANTHER" id="PTHR21600">
    <property type="entry name" value="MITOCHONDRIAL RNA PSEUDOURIDINE SYNTHASE"/>
    <property type="match status" value="1"/>
</dbReference>
<dbReference type="PANTHER" id="PTHR21600:SF44">
    <property type="entry name" value="RIBOSOMAL LARGE SUBUNIT PSEUDOURIDINE SYNTHASE D"/>
    <property type="match status" value="1"/>
</dbReference>
<dbReference type="Pfam" id="PF00849">
    <property type="entry name" value="PseudoU_synth_2"/>
    <property type="match status" value="1"/>
</dbReference>
<dbReference type="Pfam" id="PF01479">
    <property type="entry name" value="S4"/>
    <property type="match status" value="1"/>
</dbReference>
<dbReference type="SMART" id="SM00363">
    <property type="entry name" value="S4"/>
    <property type="match status" value="1"/>
</dbReference>
<dbReference type="SUPFAM" id="SSF55174">
    <property type="entry name" value="Alpha-L RNA-binding motif"/>
    <property type="match status" value="1"/>
</dbReference>
<dbReference type="SUPFAM" id="SSF55120">
    <property type="entry name" value="Pseudouridine synthase"/>
    <property type="match status" value="1"/>
</dbReference>
<dbReference type="PROSITE" id="PS01129">
    <property type="entry name" value="PSI_RLU"/>
    <property type="match status" value="1"/>
</dbReference>
<dbReference type="PROSITE" id="PS50889">
    <property type="entry name" value="S4"/>
    <property type="match status" value="1"/>
</dbReference>
<organism>
    <name type="scientific">Escherichia coli O6:H1 (strain CFT073 / ATCC 700928 / UPEC)</name>
    <dbReference type="NCBI Taxonomy" id="199310"/>
    <lineage>
        <taxon>Bacteria</taxon>
        <taxon>Pseudomonadati</taxon>
        <taxon>Pseudomonadota</taxon>
        <taxon>Gammaproteobacteria</taxon>
        <taxon>Enterobacterales</taxon>
        <taxon>Enterobacteriaceae</taxon>
        <taxon>Escherichia</taxon>
    </lineage>
</organism>
<feature type="initiator methionine" description="Removed" evidence="1">
    <location>
        <position position="1"/>
    </location>
</feature>
<feature type="chain" id="PRO_0000162689" description="Ribosomal large subunit pseudouridine synthase D">
    <location>
        <begin position="2"/>
        <end position="326"/>
    </location>
</feature>
<feature type="domain" description="S4 RNA-binding" evidence="3">
    <location>
        <begin position="18"/>
        <end position="91"/>
    </location>
</feature>
<feature type="active site" evidence="1">
    <location>
        <position position="139"/>
    </location>
</feature>
<evidence type="ECO:0000250" key="1"/>
<evidence type="ECO:0000250" key="2">
    <source>
        <dbReference type="UniProtKB" id="P33643"/>
    </source>
</evidence>
<evidence type="ECO:0000255" key="3">
    <source>
        <dbReference type="PROSITE-ProRule" id="PRU00182"/>
    </source>
</evidence>
<evidence type="ECO:0000305" key="4"/>
<accession>P65834</accession>
<accession>Q83QI0</accession>
<accession>Q8FEZ9</accession>
<comment type="function">
    <text evidence="2">Responsible for synthesis of pseudouridine from uracil at positions 1911, 1915 and 1917 in 23S ribosomal RNA.</text>
</comment>
<comment type="catalytic activity">
    <reaction evidence="2">
        <text>uridine(1911/1915/1917) in 23S rRNA = pseudouridine(1911/1915/1917) in 23S rRNA</text>
        <dbReference type="Rhea" id="RHEA:42524"/>
        <dbReference type="Rhea" id="RHEA-COMP:10097"/>
        <dbReference type="Rhea" id="RHEA-COMP:10098"/>
        <dbReference type="ChEBI" id="CHEBI:65314"/>
        <dbReference type="ChEBI" id="CHEBI:65315"/>
        <dbReference type="EC" id="5.4.99.23"/>
    </reaction>
</comment>
<comment type="subcellular location">
    <subcellularLocation>
        <location evidence="2">Cytoplasm</location>
    </subcellularLocation>
    <text evidence="2">Associates with late stage pre-50S ribosomal subunits.</text>
</comment>
<comment type="similarity">
    <text evidence="4">Belongs to the pseudouridine synthase RluA family.</text>
</comment>
<sequence length="326" mass="37108">MAQRVQLTATVSENQLGQRLDQALAEMFPDYSRSRIKEWILDQRVLVNGKVCDKPKEKVLGGEQVAINAEIEEEARFEPQDIPLDIVYEDEDIIVINKPRDLVVHPGAGNPDGTVLNALLHYYPPIADVPRAGIVHRLDKDTTGLMVVAKTVPAQTRLVESLQRREITREYEAVAIGHMTAGGTVDEPISRHPTKRTHMAVHPMGKPAVTHYRIMEHFRVHTRLRLRLETGRTHQIRVHMAHITHPLVGDPVYGGRPRPPKGASEAFISTLRKFDRQALHATMLRLYHPISGIEMEWHAPIPQDMVELIEVMRADFEEHKDEVDWL</sequence>
<protein>
    <recommendedName>
        <fullName evidence="2">Ribosomal large subunit pseudouridine synthase D</fullName>
        <ecNumber evidence="2">5.4.99.23</ecNumber>
    </recommendedName>
    <alternativeName>
        <fullName>23S rRNA pseudouridine(1911/1915/1917) synthase</fullName>
    </alternativeName>
    <alternativeName>
        <fullName>rRNA pseudouridylate synthase D</fullName>
    </alternativeName>
    <alternativeName>
        <fullName>rRNA-uridine isomerase D</fullName>
    </alternativeName>
</protein>
<name>RLUD_ECOL6</name>
<proteinExistence type="inferred from homology"/>
<keyword id="KW-0963">Cytoplasm</keyword>
<keyword id="KW-0413">Isomerase</keyword>
<keyword id="KW-1185">Reference proteome</keyword>
<keyword id="KW-0694">RNA-binding</keyword>
<keyword id="KW-0698">rRNA processing</keyword>